<reference key="1">
    <citation type="journal article" date="1983" name="J. Virol.">
        <title>Comparison of the DNA sequence of the Crawford small-plaque variant of polyomavirus with those of polyomaviruses A2 and strain 3.</title>
        <authorList>
            <person name="Rothwell V.M."/>
            <person name="Folk W.R."/>
        </authorList>
    </citation>
    <scope>NUCLEOTIDE SEQUENCE [GENOMIC DNA]</scope>
</reference>
<reference key="2">
    <citation type="submission" date="1985-11" db="EMBL/GenBank/DDBJ databases">
        <authorList>
            <person name="Rothwell V.M."/>
        </authorList>
    </citation>
    <scope>SEQUENCE REVISION</scope>
</reference>
<organism>
    <name type="scientific">Murine polyomavirus (strain Crawford small-plaque)</name>
    <name type="common">MPyV</name>
    <dbReference type="NCBI Taxonomy" id="10637"/>
    <lineage>
        <taxon>Viruses</taxon>
        <taxon>Monodnaviria</taxon>
        <taxon>Shotokuvirae</taxon>
        <taxon>Cossaviricota</taxon>
        <taxon>Papovaviricetes</taxon>
        <taxon>Sepolyvirales</taxon>
        <taxon>Polyomaviridae</taxon>
        <taxon>Alphapolyomavirus</taxon>
        <taxon>Mus musculus polyomavirus 1</taxon>
    </lineage>
</organism>
<organismHost>
    <name type="scientific">Mus musculus</name>
    <name type="common">Mouse</name>
    <dbReference type="NCBI Taxonomy" id="10090"/>
</organismHost>
<sequence>MDRVLSRADKERLLELLKLPRQLWGDFGRMQQAYKQQSLLLHPDKGGSHALMQELNSLWGTFKTEVYNLRMNLGGTGFQVRRLHADGWNLSTKDTFGDRYYQRFCRMPLTCLVNVKYSSCSCILCLLRKQHRELKDKCDARCLVLGECFCLECYMQWFGTPTRDVLNLYADFIASMPIDWLDLDVHSVYNPRLSP</sequence>
<keyword id="KW-0007">Acetylation</keyword>
<keyword id="KW-0010">Activator</keyword>
<keyword id="KW-0025">Alternative splicing</keyword>
<keyword id="KW-0244">Early protein</keyword>
<keyword id="KW-1035">Host cytoplasm</keyword>
<keyword id="KW-1048">Host nucleus</keyword>
<keyword id="KW-0945">Host-virus interaction</keyword>
<keyword id="KW-0479">Metal-binding</keyword>
<keyword id="KW-0553">Oncogene</keyword>
<keyword id="KW-0597">Phosphoprotein</keyword>
<keyword id="KW-0804">Transcription</keyword>
<keyword id="KW-0805">Transcription regulation</keyword>
<keyword id="KW-0862">Zinc</keyword>
<keyword id="KW-0863">Zinc-finger</keyword>
<evidence type="ECO:0000250" key="1">
    <source>
        <dbReference type="UniProtKB" id="P03081"/>
    </source>
</evidence>
<accession>P0C567</accession>
<dbReference type="EMBL" id="K02737">
    <property type="status" value="NOT_ANNOTATED_CDS"/>
    <property type="molecule type" value="Genomic_DNA"/>
</dbReference>
<dbReference type="SMR" id="P0C567"/>
<dbReference type="Proteomes" id="UP000008480">
    <property type="component" value="Segment"/>
</dbReference>
<dbReference type="GO" id="GO:0030430">
    <property type="term" value="C:host cell cytoplasm"/>
    <property type="evidence" value="ECO:0007669"/>
    <property type="project" value="UniProtKB-SubCell"/>
</dbReference>
<dbReference type="GO" id="GO:0042025">
    <property type="term" value="C:host cell nucleus"/>
    <property type="evidence" value="ECO:0007669"/>
    <property type="project" value="UniProtKB-SubCell"/>
</dbReference>
<dbReference type="GO" id="GO:0008270">
    <property type="term" value="F:zinc ion binding"/>
    <property type="evidence" value="ECO:0007669"/>
    <property type="project" value="UniProtKB-KW"/>
</dbReference>
<dbReference type="Gene3D" id="1.10.287.110">
    <property type="entry name" value="DnaJ domain"/>
    <property type="match status" value="1"/>
</dbReference>
<dbReference type="Gene3D" id="1.20.120.1860">
    <property type="entry name" value="Small t-antigen, unique domain"/>
    <property type="match status" value="1"/>
</dbReference>
<dbReference type="InterPro" id="IPR001623">
    <property type="entry name" value="DnaJ_domain"/>
</dbReference>
<dbReference type="InterPro" id="IPR036869">
    <property type="entry name" value="J_dom_sf"/>
</dbReference>
<dbReference type="InterPro" id="IPR003354">
    <property type="entry name" value="Papo_T_antigen"/>
</dbReference>
<dbReference type="InterPro" id="IPR036092">
    <property type="entry name" value="Papo_T_antigensf"/>
</dbReference>
<dbReference type="Pfam" id="PF02380">
    <property type="entry name" value="Papo_T_antigen"/>
    <property type="match status" value="1"/>
</dbReference>
<dbReference type="SMART" id="SM00271">
    <property type="entry name" value="DnaJ"/>
    <property type="match status" value="1"/>
</dbReference>
<dbReference type="SUPFAM" id="SSF46565">
    <property type="entry name" value="Chaperone J-domain"/>
    <property type="match status" value="1"/>
</dbReference>
<dbReference type="SUPFAM" id="SSF161240">
    <property type="entry name" value="T-antigen specific domain-like"/>
    <property type="match status" value="1"/>
</dbReference>
<proteinExistence type="inferred from homology"/>
<protein>
    <recommendedName>
        <fullName>Small t antigen</fullName>
        <shortName>ST</shortName>
        <shortName>ST-AG</shortName>
    </recommendedName>
</protein>
<comment type="function">
    <text evidence="1">Promotes efficient viral genome replication by accelerating both G1 and S phase progression of the cell cycle. Inhibits host PP2A by binding to the A subunit, thereby displacing lower affinity regulatory B subunit. Inactivation of PP2A in turn results in the transactivation of cyclin A and cyclin D1 promoters. Late during the infection cycle, ST may induce dephosphorylation of host MTOR, leading to the inhibition of cap-dependent translation. May establish and maintain high levels of viral genomes during persistent infection in cell culture.</text>
</comment>
<comment type="subunit">
    <text evidence="1">Interacts with host PPP2R1A; the interaction inhibits PP2A activity.</text>
</comment>
<comment type="subcellular location">
    <subcellularLocation>
        <location>Host cytoplasm</location>
    </subcellularLocation>
    <subcellularLocation>
        <location evidence="1">Host nucleus</location>
    </subcellularLocation>
</comment>
<comment type="alternative products">
    <event type="alternative splicing"/>
    <isoform>
        <id>P0C567-1</id>
        <name>Small t antigen</name>
        <sequence type="displayed"/>
    </isoform>
    <isoform>
        <id>P12906-1</id>
        <name>Middle T antigen</name>
        <sequence type="external"/>
    </isoform>
    <isoform>
        <id>P12905-1</id>
        <name>Large T antigen</name>
        <sequence type="external"/>
    </isoform>
</comment>
<comment type="domain">
    <text evidence="1">The common region of ST and LT proteins comprises the J domain. This domain is essential for multiple viral activities, including virion assembly, viral DNA replication, transformation and transcriptional activation. This domain is also required for cyclin A-transactivating activity of ST.</text>
</comment>
<name>ST_POVMC</name>
<feature type="chain" id="PRO_0000294232" description="Small t antigen">
    <location>
        <begin position="1"/>
        <end position="195"/>
    </location>
</feature>
<feature type="domain" description="J">
    <location>
        <begin position="12"/>
        <end position="75"/>
    </location>
</feature>
<feature type="zinc finger region" description="C4-type; atypical">
    <location>
        <begin position="111"/>
        <end position="125"/>
    </location>
</feature>
<feature type="zinc finger region" description="H1C3-type; atypical">
    <location>
        <begin position="131"/>
        <end position="153"/>
    </location>
</feature>
<feature type="modified residue" description="N-acetylmethionine; by host" evidence="1">
    <location>
        <position position="1"/>
    </location>
</feature>